<protein>
    <recommendedName>
        <fullName evidence="1">Large ribosomal subunit protein bL33C</fullName>
    </recommendedName>
    <alternativeName>
        <fullName evidence="1">50S ribosomal protein L33 3</fullName>
    </alternativeName>
</protein>
<reference key="1">
    <citation type="journal article" date="2007" name="J. Bacteriol.">
        <title>The complete genome sequence of the lactic acid bacterial paradigm Lactococcus lactis subsp. cremoris MG1363.</title>
        <authorList>
            <person name="Wegmann U."/>
            <person name="O'Connell-Motherway M."/>
            <person name="Zomer A."/>
            <person name="Buist G."/>
            <person name="Shearman C."/>
            <person name="Canchaya C."/>
            <person name="Ventura M."/>
            <person name="Goesmann A."/>
            <person name="Gasson M.J."/>
            <person name="Kuipers O.P."/>
            <person name="van Sinderen D."/>
            <person name="Kok J."/>
        </authorList>
    </citation>
    <scope>NUCLEOTIDE SEQUENCE [LARGE SCALE GENOMIC DNA]</scope>
    <source>
        <strain>MG1363</strain>
    </source>
</reference>
<accession>A2RNR2</accession>
<gene>
    <name evidence="1" type="primary">rpmG3</name>
    <name type="synonym">rpmGC</name>
    <name type="ordered locus">llmg_2390</name>
</gene>
<proteinExistence type="evidence at protein level"/>
<organism>
    <name type="scientific">Lactococcus lactis subsp. cremoris (strain MG1363)</name>
    <dbReference type="NCBI Taxonomy" id="416870"/>
    <lineage>
        <taxon>Bacteria</taxon>
        <taxon>Bacillati</taxon>
        <taxon>Bacillota</taxon>
        <taxon>Bacilli</taxon>
        <taxon>Lactobacillales</taxon>
        <taxon>Streptococcaceae</taxon>
        <taxon>Lactococcus</taxon>
        <taxon>Lactococcus cremoris subsp. cremoris</taxon>
    </lineage>
</organism>
<sequence length="49" mass="5554">MLRKAGLACTVCGSRNYTLNLSSVAKEKRVEVKKFCRTCGKHTLHKETR</sequence>
<name>RL333_LACLM</name>
<dbReference type="EMBL" id="AM406671">
    <property type="protein sequence ID" value="CAL98953.1"/>
    <property type="molecule type" value="Genomic_DNA"/>
</dbReference>
<dbReference type="RefSeq" id="WP_011677168.1">
    <property type="nucleotide sequence ID" value="NC_009004.1"/>
</dbReference>
<dbReference type="PDB" id="5MYJ">
    <property type="method" value="EM"/>
    <property type="resolution" value="5.60 A"/>
    <property type="chains" value="B5=1-49"/>
</dbReference>
<dbReference type="PDBsum" id="5MYJ"/>
<dbReference type="EMDB" id="EMD-3581"/>
<dbReference type="SMR" id="A2RNR2"/>
<dbReference type="STRING" id="416870.llmg_2390"/>
<dbReference type="GeneID" id="61110434"/>
<dbReference type="KEGG" id="llm:llmg_2390"/>
<dbReference type="eggNOG" id="COG0267">
    <property type="taxonomic scope" value="Bacteria"/>
</dbReference>
<dbReference type="HOGENOM" id="CLU_190949_0_1_9"/>
<dbReference type="OrthoDB" id="9801333at2"/>
<dbReference type="PhylomeDB" id="A2RNR2"/>
<dbReference type="Proteomes" id="UP000000364">
    <property type="component" value="Chromosome"/>
</dbReference>
<dbReference type="GO" id="GO:0005737">
    <property type="term" value="C:cytoplasm"/>
    <property type="evidence" value="ECO:0007669"/>
    <property type="project" value="UniProtKB-ARBA"/>
</dbReference>
<dbReference type="GO" id="GO:1990904">
    <property type="term" value="C:ribonucleoprotein complex"/>
    <property type="evidence" value="ECO:0007669"/>
    <property type="project" value="UniProtKB-KW"/>
</dbReference>
<dbReference type="GO" id="GO:0005840">
    <property type="term" value="C:ribosome"/>
    <property type="evidence" value="ECO:0007669"/>
    <property type="project" value="UniProtKB-KW"/>
</dbReference>
<dbReference type="GO" id="GO:0003735">
    <property type="term" value="F:structural constituent of ribosome"/>
    <property type="evidence" value="ECO:0007669"/>
    <property type="project" value="InterPro"/>
</dbReference>
<dbReference type="GO" id="GO:0006412">
    <property type="term" value="P:translation"/>
    <property type="evidence" value="ECO:0007669"/>
    <property type="project" value="UniProtKB-UniRule"/>
</dbReference>
<dbReference type="Gene3D" id="2.20.28.120">
    <property type="entry name" value="Ribosomal protein L33"/>
    <property type="match status" value="1"/>
</dbReference>
<dbReference type="HAMAP" id="MF_00294">
    <property type="entry name" value="Ribosomal_bL33"/>
    <property type="match status" value="1"/>
</dbReference>
<dbReference type="InterPro" id="IPR001705">
    <property type="entry name" value="Ribosomal_bL33"/>
</dbReference>
<dbReference type="InterPro" id="IPR038584">
    <property type="entry name" value="Ribosomal_bL33_sf"/>
</dbReference>
<dbReference type="InterPro" id="IPR011332">
    <property type="entry name" value="Ribosomal_zn-bd"/>
</dbReference>
<dbReference type="NCBIfam" id="NF001764">
    <property type="entry name" value="PRK00504.1"/>
    <property type="match status" value="1"/>
</dbReference>
<dbReference type="NCBIfam" id="TIGR01023">
    <property type="entry name" value="rpmG_bact"/>
    <property type="match status" value="1"/>
</dbReference>
<dbReference type="Pfam" id="PF00471">
    <property type="entry name" value="Ribosomal_L33"/>
    <property type="match status" value="1"/>
</dbReference>
<dbReference type="SUPFAM" id="SSF57829">
    <property type="entry name" value="Zn-binding ribosomal proteins"/>
    <property type="match status" value="1"/>
</dbReference>
<feature type="chain" id="PRO_0000356518" description="Large ribosomal subunit protein bL33C">
    <location>
        <begin position="1"/>
        <end position="49"/>
    </location>
</feature>
<evidence type="ECO:0000255" key="1">
    <source>
        <dbReference type="HAMAP-Rule" id="MF_00294"/>
    </source>
</evidence>
<comment type="similarity">
    <text evidence="1">Belongs to the bacterial ribosomal protein bL33 family.</text>
</comment>
<keyword id="KW-0002">3D-structure</keyword>
<keyword id="KW-0687">Ribonucleoprotein</keyword>
<keyword id="KW-0689">Ribosomal protein</keyword>